<organism>
    <name type="scientific">Salmonella typhimurium (strain LT2 / SGSC1412 / ATCC 700720)</name>
    <dbReference type="NCBI Taxonomy" id="99287"/>
    <lineage>
        <taxon>Bacteria</taxon>
        <taxon>Pseudomonadati</taxon>
        <taxon>Pseudomonadota</taxon>
        <taxon>Gammaproteobacteria</taxon>
        <taxon>Enterobacterales</taxon>
        <taxon>Enterobacteriaceae</taxon>
        <taxon>Salmonella</taxon>
    </lineage>
</organism>
<reference key="1">
    <citation type="journal article" date="1995" name="Mol. Microbiol.">
        <title>hilA is a novel ompR/toxR family member that activates the expression of Salmonella typhimurium invasion genes.</title>
        <authorList>
            <person name="Bajaj V."/>
            <person name="Hwang C."/>
            <person name="Lee C.A."/>
        </authorList>
    </citation>
    <scope>NUCLEOTIDE SEQUENCE [GENOMIC DNA]</scope>
    <scope>FUNCTION</scope>
    <source>
        <strain>SL1344</strain>
    </source>
</reference>
<reference key="2">
    <citation type="journal article" date="2001" name="Nature">
        <title>Complete genome sequence of Salmonella enterica serovar Typhimurium LT2.</title>
        <authorList>
            <person name="McClelland M."/>
            <person name="Sanderson K.E."/>
            <person name="Spieth J."/>
            <person name="Clifton S.W."/>
            <person name="Latreille P."/>
            <person name="Courtney L."/>
            <person name="Porwollik S."/>
            <person name="Ali J."/>
            <person name="Dante M."/>
            <person name="Du F."/>
            <person name="Hou S."/>
            <person name="Layman D."/>
            <person name="Leonard S."/>
            <person name="Nguyen C."/>
            <person name="Scott K."/>
            <person name="Holmes A."/>
            <person name="Grewal N."/>
            <person name="Mulvaney E."/>
            <person name="Ryan E."/>
            <person name="Sun H."/>
            <person name="Florea L."/>
            <person name="Miller W."/>
            <person name="Stoneking T."/>
            <person name="Nhan M."/>
            <person name="Waterston R."/>
            <person name="Wilson R.K."/>
        </authorList>
    </citation>
    <scope>NUCLEOTIDE SEQUENCE [LARGE SCALE GENOMIC DNA]</scope>
    <source>
        <strain>LT2 / SGSC1412 / ATCC 700720</strain>
    </source>
</reference>
<reference key="3">
    <citation type="journal article" date="1996" name="Mol. Microbiol.">
        <title>Co-ordinate regulation of Salmonella typhimurium invasion genes by environmental and regulatory factors is mediated by control of hilA expression.</title>
        <authorList>
            <person name="Bajaj V."/>
            <person name="Lucas R.L."/>
            <person name="Hwang C."/>
            <person name="Lee C.A."/>
        </authorList>
    </citation>
    <scope>FUNCTION</scope>
    <source>
        <strain>SL1344</strain>
    </source>
</reference>
<reference key="4">
    <citation type="journal article" date="2000" name="Mol. Microbiol.">
        <title>The cis requirements for transcriptional activation by HilA, a virulence determinant encoded on SPI-1.</title>
        <authorList>
            <person name="Lostroh C.P."/>
            <person name="Bajaj V."/>
            <person name="Lee C.A."/>
        </authorList>
    </citation>
    <scope>FUNCTION</scope>
    <source>
        <strain>SL1344</strain>
        <strain>SL5283</strain>
    </source>
</reference>
<reference key="5">
    <citation type="journal article" date="2001" name="J. Bacteriol.">
        <title>The HilA box and sequences outside it determine the magnitude of HilA-dependent activation of P(prgH) from Salmonella pathogenicity island 1.</title>
        <authorList>
            <person name="Lostroh C.P."/>
            <person name="Lee C.A."/>
        </authorList>
    </citation>
    <scope>REGULATION OF PRG OPERON</scope>
    <source>
        <strain>SL1344</strain>
        <strain>SL5283</strain>
    </source>
</reference>
<reference key="6">
    <citation type="journal article" date="2001" name="Microbes Infect.">
        <title>The Salmonella pathogenicity island-1 type III secretion system.</title>
        <authorList>
            <person name="Lostroh C.P."/>
            <person name="Lee C.A."/>
        </authorList>
    </citation>
    <scope>REVIEW</scope>
</reference>
<reference key="7">
    <citation type="journal article" date="2001" name="Mol. Microbiol.">
        <title>AraC/XylS family members, HilC and HilD, directly bind and derepress the Salmonella typhimurium hilA promoter.</title>
        <authorList>
            <person name="Schechter L.M."/>
            <person name="Lee C.A."/>
        </authorList>
    </citation>
    <scope>REGULATION BY HILC AND HILD</scope>
    <source>
        <strain>SL1344</strain>
    </source>
</reference>
<reference key="8">
    <citation type="journal article" date="2005" name="Vet. Microbiol.">
        <title>Survival of Salmonella serovar Typhimurium inside porcine monocytes is associated with complement binding and suppression of the production of reactive oxygen species.</title>
        <authorList>
            <person name="Donne E."/>
            <person name="Pasmans F."/>
            <person name="Boyen F."/>
            <person name="Van Immerseel F."/>
            <person name="Adriaensen C."/>
            <person name="Hernalsteens J.P."/>
            <person name="Ducatelle R."/>
            <person name="Haesebrouck F."/>
        </authorList>
    </citation>
    <scope>DISRUPTION PHENOTYPE</scope>
    <source>
        <strain evidence="8">112910a</strain>
    </source>
</reference>
<reference key="9">
    <citation type="journal article" date="2014" name="MBio">
        <title>A horizontally acquired transcription factor coordinates Salmonella adaptations to host microenvironments.</title>
        <authorList>
            <person name="Brown N.F."/>
            <person name="Rogers L.D."/>
            <person name="Sanderson K.L."/>
            <person name="Gouw J.W."/>
            <person name="Hartland E.L."/>
            <person name="Foster L.J."/>
        </authorList>
    </citation>
    <scope>FUNCTION</scope>
    <scope>DISRUPTION PHENOTYPE</scope>
</reference>
<feature type="chain" id="PRO_0000081108" description="Transcriptional regulator HilA">
    <location>
        <begin position="1"/>
        <end position="553"/>
    </location>
</feature>
<feature type="repeat" description="TPR">
    <location>
        <begin position="372"/>
        <end position="405"/>
    </location>
</feature>
<feature type="DNA-binding region" description="OmpR/PhoB-type" evidence="2">
    <location>
        <begin position="11"/>
        <end position="107"/>
    </location>
</feature>
<feature type="modified residue" description="4-aspartylphosphate" evidence="1">
    <location>
        <position position="62"/>
    </location>
</feature>
<feature type="sequence conflict" description="In Ref. 1; AAD12579." evidence="9" ref="1">
    <original>L</original>
    <variation>V</variation>
    <location>
        <position position="28"/>
    </location>
</feature>
<accession>P43015</accession>
<proteinExistence type="evidence at transcript level"/>
<comment type="function">
    <text evidence="3 5 6 7">The main transcriptional regulator of the Salmonella pathogenicity island 1 (SPI1) gene expression (PubMed:10931326, PubMed:25249283, PubMed:8817493, PubMed:8951817). Activates the expression of invasion genes by a direct action at their promoters and also indirectly by increasing the level of InvF (PubMed:10931326, PubMed:25249283, PubMed:8817493, PubMed:8951817). Also binds upstream of prgH and directly activates the expression of prgHIJK operon (PubMed:10931326).</text>
</comment>
<comment type="induction">
    <text>Expressed in response to both environmental conditions and genetic regulatory factors. Transcription is subject to complex control and is stimulated by the SPI1-encoded HilC and HilD.</text>
</comment>
<comment type="disruption phenotype">
    <text evidence="4 5">Abnormal expression of genes encoding virulence proteins (PubMed:25249283). Does not affect the production of reactive oxygen species (ROS) in infected pigs (PubMed:15863279).</text>
</comment>
<keyword id="KW-0010">Activator</keyword>
<keyword id="KW-0238">DNA-binding</keyword>
<keyword id="KW-0597">Phosphoprotein</keyword>
<keyword id="KW-1185">Reference proteome</keyword>
<keyword id="KW-0802">TPR repeat</keyword>
<keyword id="KW-0804">Transcription</keyword>
<keyword id="KW-0805">Transcription regulation</keyword>
<keyword id="KW-0902">Two-component regulatory system</keyword>
<keyword id="KW-0843">Virulence</keyword>
<gene>
    <name type="primary">hilA</name>
    <name type="synonym">iagA</name>
    <name type="ordered locus">STM2876</name>
</gene>
<evidence type="ECO:0000250" key="1"/>
<evidence type="ECO:0000255" key="2">
    <source>
        <dbReference type="PROSITE-ProRule" id="PRU01091"/>
    </source>
</evidence>
<evidence type="ECO:0000269" key="3">
    <source>
    </source>
</evidence>
<evidence type="ECO:0000269" key="4">
    <source>
    </source>
</evidence>
<evidence type="ECO:0000269" key="5">
    <source>
    </source>
</evidence>
<evidence type="ECO:0000269" key="6">
    <source>
    </source>
</evidence>
<evidence type="ECO:0000269" key="7">
    <source>
    </source>
</evidence>
<evidence type="ECO:0000303" key="8">
    <source>
    </source>
</evidence>
<evidence type="ECO:0000305" key="9"/>
<sequence>MPHFNPVPVSNKKFVFDDFILNMDGSLLRSEKKVNIPPKEYAVLVILLEAAGEIVSKNTLLDQVWGDAEVNEESLTRCIYALRRILSEDKEHRYIETLYGQGYRFNRPVVVVSPPAPQPTTHTLAILPFQMQDQVQSESLHYSIVKGLSQYAPFGLSVLPVTITKNCRSVKDILELMDQLRPDYYISGQMIPDGNDNIVQIEIVRVKGYHLLHQESIKLIEHQPASLLQNKIANLLLRCIPGLRWDTKQISELNSIDSTMVYLRGKHELNQYTPYSLQQALKLLTQCVNMSPNSIAPYCALAECYLSMAQMGIFDKQNAMIKAKEHAIKATELDHNNPQALGLLGLINTIHSEYIVGSLLFKQANLLSPISADIKYYYGWNLFMAGQLEEALQTINECLKLDPTRAAAGITKLWITYYHTGIDDAIRLGDELRSQHLQDNPILLSMQVMFLSLKGKHELARKLTKEISTQEITGLIAVNLLYAEYCQNSERALPTIREFLESEQRIDNNPGLLPLVLVAHGEAIAEKMWNKFKNEDNIWFKRWKQDPRLIKLR</sequence>
<name>HILA_SALTY</name>
<dbReference type="EMBL" id="U25352">
    <property type="protein sequence ID" value="AAD12579.1"/>
    <property type="molecule type" value="Genomic_DNA"/>
</dbReference>
<dbReference type="EMBL" id="AE006468">
    <property type="protein sequence ID" value="AAL21756.1"/>
    <property type="molecule type" value="Genomic_DNA"/>
</dbReference>
<dbReference type="PIR" id="S70817">
    <property type="entry name" value="S70817"/>
</dbReference>
<dbReference type="RefSeq" id="NP_461797.1">
    <property type="nucleotide sequence ID" value="NC_003197.2"/>
</dbReference>
<dbReference type="RefSeq" id="WP_001120085.1">
    <property type="nucleotide sequence ID" value="NC_003197.2"/>
</dbReference>
<dbReference type="SMR" id="P43015"/>
<dbReference type="STRING" id="99287.STM2876"/>
<dbReference type="PaxDb" id="99287-STM2876"/>
<dbReference type="GeneID" id="1254399"/>
<dbReference type="KEGG" id="stm:STM2876"/>
<dbReference type="PATRIC" id="fig|99287.12.peg.3032"/>
<dbReference type="HOGENOM" id="CLU_034088_0_0_6"/>
<dbReference type="OMA" id="AGIAEMW"/>
<dbReference type="PhylomeDB" id="P43015"/>
<dbReference type="BioCyc" id="SENT99287:STM2876-MONOMER"/>
<dbReference type="PHI-base" id="PHI:10184"/>
<dbReference type="PHI-base" id="PHI:563"/>
<dbReference type="PHI-base" id="PHI:8302"/>
<dbReference type="Proteomes" id="UP000001014">
    <property type="component" value="Chromosome"/>
</dbReference>
<dbReference type="GO" id="GO:0005829">
    <property type="term" value="C:cytosol"/>
    <property type="evidence" value="ECO:0000318"/>
    <property type="project" value="GO_Central"/>
</dbReference>
<dbReference type="GO" id="GO:0032993">
    <property type="term" value="C:protein-DNA complex"/>
    <property type="evidence" value="ECO:0000318"/>
    <property type="project" value="GO_Central"/>
</dbReference>
<dbReference type="GO" id="GO:0000156">
    <property type="term" value="F:phosphorelay response regulator activity"/>
    <property type="evidence" value="ECO:0000318"/>
    <property type="project" value="GO_Central"/>
</dbReference>
<dbReference type="GO" id="GO:0000976">
    <property type="term" value="F:transcription cis-regulatory region binding"/>
    <property type="evidence" value="ECO:0000318"/>
    <property type="project" value="GO_Central"/>
</dbReference>
<dbReference type="GO" id="GO:0006355">
    <property type="term" value="P:regulation of DNA-templated transcription"/>
    <property type="evidence" value="ECO:0000318"/>
    <property type="project" value="GO_Central"/>
</dbReference>
<dbReference type="CDD" id="cd00383">
    <property type="entry name" value="trans_reg_C"/>
    <property type="match status" value="1"/>
</dbReference>
<dbReference type="Gene3D" id="1.25.40.10">
    <property type="entry name" value="Tetratricopeptide repeat domain"/>
    <property type="match status" value="1"/>
</dbReference>
<dbReference type="Gene3D" id="1.10.10.10">
    <property type="entry name" value="Winged helix-like DNA-binding domain superfamily/Winged helix DNA-binding domain"/>
    <property type="match status" value="1"/>
</dbReference>
<dbReference type="InterPro" id="IPR001867">
    <property type="entry name" value="OmpR/PhoB-type_DNA-bd"/>
</dbReference>
<dbReference type="InterPro" id="IPR016032">
    <property type="entry name" value="Sig_transdc_resp-reg_C-effctor"/>
</dbReference>
<dbReference type="InterPro" id="IPR011990">
    <property type="entry name" value="TPR-like_helical_dom_sf"/>
</dbReference>
<dbReference type="InterPro" id="IPR019734">
    <property type="entry name" value="TPR_rpt"/>
</dbReference>
<dbReference type="InterPro" id="IPR036388">
    <property type="entry name" value="WH-like_DNA-bd_sf"/>
</dbReference>
<dbReference type="NCBIfam" id="NF009037">
    <property type="entry name" value="PRK12370.1"/>
    <property type="match status" value="1"/>
</dbReference>
<dbReference type="Pfam" id="PF00486">
    <property type="entry name" value="Trans_reg_C"/>
    <property type="match status" value="1"/>
</dbReference>
<dbReference type="SMART" id="SM00862">
    <property type="entry name" value="Trans_reg_C"/>
    <property type="match status" value="1"/>
</dbReference>
<dbReference type="SUPFAM" id="SSF46894">
    <property type="entry name" value="C-terminal effector domain of the bipartite response regulators"/>
    <property type="match status" value="1"/>
</dbReference>
<dbReference type="SUPFAM" id="SSF48452">
    <property type="entry name" value="TPR-like"/>
    <property type="match status" value="1"/>
</dbReference>
<dbReference type="PROSITE" id="PS51755">
    <property type="entry name" value="OMPR_PHOB"/>
    <property type="match status" value="1"/>
</dbReference>
<dbReference type="PROSITE" id="PS50005">
    <property type="entry name" value="TPR"/>
    <property type="match status" value="1"/>
</dbReference>
<dbReference type="PROSITE" id="PS50293">
    <property type="entry name" value="TPR_REGION"/>
    <property type="match status" value="1"/>
</dbReference>
<protein>
    <recommendedName>
        <fullName>Transcriptional regulator HilA</fullName>
        <shortName>Protein IagA</shortName>
    </recommendedName>
</protein>